<keyword id="KW-0002">3D-structure</keyword>
<keyword id="KW-0119">Carbohydrate metabolism</keyword>
<keyword id="KW-0134">Cell wall</keyword>
<keyword id="KW-0136">Cellulose degradation</keyword>
<keyword id="KW-0624">Polysaccharide degradation</keyword>
<keyword id="KW-1185">Reference proteome</keyword>
<keyword id="KW-0677">Repeat</keyword>
<keyword id="KW-0701">S-layer</keyword>
<keyword id="KW-0964">Secreted</keyword>
<keyword id="KW-0732">Signal</keyword>
<protein>
    <recommendedName>
        <fullName>Cellulosome-anchoring protein</fullName>
    </recommendedName>
</protein>
<name>ANCA_ACET2</name>
<feature type="signal peptide" evidence="1">
    <location>
        <begin position="1"/>
        <end position="29"/>
    </location>
</feature>
<feature type="chain" id="PRO_0000032636" description="Cellulosome-anchoring protein">
    <location>
        <begin position="30"/>
        <end position="447"/>
    </location>
</feature>
<feature type="domain" description="Cohesin">
    <location>
        <begin position="30"/>
        <end position="180"/>
    </location>
</feature>
<feature type="domain" description="SLH 1" evidence="2">
    <location>
        <begin position="216"/>
        <end position="280"/>
    </location>
</feature>
<feature type="domain" description="SLH 2" evidence="2">
    <location>
        <begin position="281"/>
        <end position="344"/>
    </location>
</feature>
<feature type="domain" description="SLH 3" evidence="2">
    <location>
        <begin position="345"/>
        <end position="408"/>
    </location>
</feature>
<feature type="domain" description="SLH 4; truncated" evidence="2">
    <location>
        <begin position="409"/>
        <end position="429"/>
    </location>
</feature>
<feature type="region of interest" description="Receptor binding site for duplicated segment of CipA" evidence="1">
    <location>
        <begin position="30"/>
        <end position="180"/>
    </location>
</feature>
<feature type="region of interest" description="Disordered" evidence="3">
    <location>
        <begin position="177"/>
        <end position="247"/>
    </location>
</feature>
<feature type="compositionally biased region" description="Gly residues" evidence="3">
    <location>
        <begin position="188"/>
        <end position="200"/>
    </location>
</feature>
<feature type="compositionally biased region" description="Low complexity" evidence="3">
    <location>
        <begin position="201"/>
        <end position="223"/>
    </location>
</feature>
<feature type="strand" evidence="4">
    <location>
        <begin position="35"/>
        <end position="38"/>
    </location>
</feature>
<feature type="strand" evidence="4">
    <location>
        <begin position="40"/>
        <end position="43"/>
    </location>
</feature>
<feature type="strand" evidence="4">
    <location>
        <begin position="48"/>
        <end position="57"/>
    </location>
</feature>
<feature type="strand" evidence="4">
    <location>
        <begin position="63"/>
        <end position="71"/>
    </location>
</feature>
<feature type="turn" evidence="4">
    <location>
        <begin position="74"/>
        <end position="76"/>
    </location>
</feature>
<feature type="strand" evidence="4">
    <location>
        <begin position="77"/>
        <end position="84"/>
    </location>
</feature>
<feature type="strand" evidence="4">
    <location>
        <begin position="88"/>
        <end position="90"/>
    </location>
</feature>
<feature type="helix" evidence="4">
    <location>
        <begin position="91"/>
        <end position="94"/>
    </location>
</feature>
<feature type="strand" evidence="4">
    <location>
        <begin position="95"/>
        <end position="100"/>
    </location>
</feature>
<feature type="helix" evidence="4">
    <location>
        <begin position="101"/>
        <end position="103"/>
    </location>
</feature>
<feature type="strand" evidence="4">
    <location>
        <begin position="105"/>
        <end position="111"/>
    </location>
</feature>
<feature type="strand" evidence="4">
    <location>
        <begin position="113"/>
        <end position="117"/>
    </location>
</feature>
<feature type="strand" evidence="4">
    <location>
        <begin position="125"/>
        <end position="134"/>
    </location>
</feature>
<feature type="strand" evidence="4">
    <location>
        <begin position="140"/>
        <end position="155"/>
    </location>
</feature>
<feature type="strand" evidence="4">
    <location>
        <begin position="164"/>
        <end position="166"/>
    </location>
</feature>
<feature type="strand" evidence="4">
    <location>
        <begin position="168"/>
        <end position="172"/>
    </location>
</feature>
<comment type="function">
    <text>Anchors the cellulosome to the cell surface by binding the duplicated segment that is present at the C-terminal end of CipA.</text>
</comment>
<comment type="subcellular location">
    <subcellularLocation>
        <location>Secreted</location>
        <location>Cell wall</location>
        <location>S-layer</location>
    </subcellularLocation>
</comment>
<organism>
    <name type="scientific">Acetivibrio thermocellus (strain ATCC 27405 / DSM 1237 / JCM 9322 / NBRC 103400 / NCIMB 10682 / NRRL B-4536 / VPI 7372)</name>
    <name type="common">Clostridium thermocellum</name>
    <dbReference type="NCBI Taxonomy" id="203119"/>
    <lineage>
        <taxon>Bacteria</taxon>
        <taxon>Bacillati</taxon>
        <taxon>Bacillota</taxon>
        <taxon>Clostridia</taxon>
        <taxon>Eubacteriales</taxon>
        <taxon>Oscillospiraceae</taxon>
        <taxon>Acetivibrio</taxon>
    </lineage>
</organism>
<accession>Q06848</accession>
<accession>A3DJZ7</accession>
<reference key="1">
    <citation type="journal article" date="1993" name="J. Bacteriol.">
        <title>Organization of a Clostridium thermocellum gene cluster encoding the cellulosomal scaffolding protein CipA and a protein possibly involved in attachment of the cellulosome to the cell surface.</title>
        <authorList>
            <person name="Fujino T."/>
            <person name="Beguin P."/>
            <person name="Aubert J.-P."/>
        </authorList>
    </citation>
    <scope>NUCLEOTIDE SEQUENCE [GENOMIC DNA]</scope>
</reference>
<reference key="2">
    <citation type="submission" date="2007-02" db="EMBL/GenBank/DDBJ databases">
        <title>Complete sequence of Clostridium thermocellum ATCC 27405.</title>
        <authorList>
            <consortium name="US DOE Joint Genome Institute"/>
            <person name="Copeland A."/>
            <person name="Lucas S."/>
            <person name="Lapidus A."/>
            <person name="Barry K."/>
            <person name="Detter J.C."/>
            <person name="Glavina del Rio T."/>
            <person name="Hammon N."/>
            <person name="Israni S."/>
            <person name="Dalin E."/>
            <person name="Tice H."/>
            <person name="Pitluck S."/>
            <person name="Chertkov O."/>
            <person name="Brettin T."/>
            <person name="Bruce D."/>
            <person name="Han C."/>
            <person name="Tapia R."/>
            <person name="Gilna P."/>
            <person name="Schmutz J."/>
            <person name="Larimer F."/>
            <person name="Land M."/>
            <person name="Hauser L."/>
            <person name="Kyrpides N."/>
            <person name="Mikhailova N."/>
            <person name="Wu J.H.D."/>
            <person name="Newcomb M."/>
            <person name="Richardson P."/>
        </authorList>
    </citation>
    <scope>NUCLEOTIDE SEQUENCE [LARGE SCALE GENOMIC DNA]</scope>
    <source>
        <strain>ATCC 27405 / DSM 1237 / JCM 9322 / NBRC 103400 / NCIMB 10682 / NRRL B-4536 / VPI 7372</strain>
    </source>
</reference>
<sequence length="447" mass="48530">MKRIKRILAVLTIFALLATINAFTFVSLAQTNTIEIIIGNVKARPGDRIEVPVSLKNVPDKGIVSSDFVIEYDSKLFKVIELKAGDIVENPSESFSYNVVEKDEIIAVLYLEETGLGIEAIRTDGVFFTIVMEVSKDVKPGISPIKFESFGATADNDMNEMTPKLVEGKVEIIEASAPEATPTPGSTAGSGAGGGTGSSGSGQPSATPTPTATEKPSTTPKTTEQPHEDIPQSGGTGEHAPFLKGYPGGLFKPENNITRAEAAVIFAKLLGADENSAGKNSSITFKDLKDSHWAAWAIKYVTEQNLFGGYPDGTFMPDKSITRAEFATVTYKFLEKLGKIEQGTDVKTQLKDIEGHWAQKYIETLVAKGYIKGYPDETFRPQASIKRAESVALINRSLERGPLNGAVLEFTDVPVNYWAYKDIAEGVIYHSYKIDENGQEVMVEKLD</sequence>
<proteinExistence type="evidence at protein level"/>
<dbReference type="EMBL" id="X67506">
    <property type="protein sequence ID" value="CAA47843.1"/>
    <property type="molecule type" value="Genomic_DNA"/>
</dbReference>
<dbReference type="EMBL" id="CP000568">
    <property type="protein sequence ID" value="ABN54276.1"/>
    <property type="molecule type" value="Genomic_DNA"/>
</dbReference>
<dbReference type="PIR" id="T18264">
    <property type="entry name" value="T18264"/>
</dbReference>
<dbReference type="RefSeq" id="WP_003511554.1">
    <property type="nucleotide sequence ID" value="NC_009012.1"/>
</dbReference>
<dbReference type="PDB" id="3UL4">
    <property type="method" value="X-ray"/>
    <property type="resolution" value="1.95 A"/>
    <property type="chains" value="A=30-175"/>
</dbReference>
<dbReference type="PDBsum" id="3UL4"/>
<dbReference type="SMR" id="Q06848"/>
<dbReference type="STRING" id="203119.Cthe_3080"/>
<dbReference type="GeneID" id="35803510"/>
<dbReference type="KEGG" id="cth:Cthe_3080"/>
<dbReference type="eggNOG" id="COG1361">
    <property type="taxonomic scope" value="Bacteria"/>
</dbReference>
<dbReference type="HOGENOM" id="CLU_623622_0_0_9"/>
<dbReference type="OrthoDB" id="43070at2"/>
<dbReference type="EvolutionaryTrace" id="Q06848"/>
<dbReference type="Proteomes" id="UP000002145">
    <property type="component" value="Chromosome"/>
</dbReference>
<dbReference type="GO" id="GO:0005576">
    <property type="term" value="C:extracellular region"/>
    <property type="evidence" value="ECO:0007669"/>
    <property type="project" value="UniProtKB-KW"/>
</dbReference>
<dbReference type="GO" id="GO:0030115">
    <property type="term" value="C:S-layer"/>
    <property type="evidence" value="ECO:0007669"/>
    <property type="project" value="UniProtKB-SubCell"/>
</dbReference>
<dbReference type="GO" id="GO:0030246">
    <property type="term" value="F:carbohydrate binding"/>
    <property type="evidence" value="ECO:0007669"/>
    <property type="project" value="InterPro"/>
</dbReference>
<dbReference type="GO" id="GO:0030245">
    <property type="term" value="P:cellulose catabolic process"/>
    <property type="evidence" value="ECO:0007669"/>
    <property type="project" value="UniProtKB-KW"/>
</dbReference>
<dbReference type="CDD" id="cd08548">
    <property type="entry name" value="Type_I_cohesin_like"/>
    <property type="match status" value="1"/>
</dbReference>
<dbReference type="Gene3D" id="2.60.40.680">
    <property type="match status" value="1"/>
</dbReference>
<dbReference type="InterPro" id="IPR008965">
    <property type="entry name" value="CBM2/CBM3_carb-bd_dom_sf"/>
</dbReference>
<dbReference type="InterPro" id="IPR051465">
    <property type="entry name" value="Cell_Envelope_Struct_Comp"/>
</dbReference>
<dbReference type="InterPro" id="IPR002102">
    <property type="entry name" value="Cohesin_dom"/>
</dbReference>
<dbReference type="InterPro" id="IPR001119">
    <property type="entry name" value="SLH_dom"/>
</dbReference>
<dbReference type="PANTHER" id="PTHR43308">
    <property type="entry name" value="OUTER MEMBRANE PROTEIN ALPHA-RELATED"/>
    <property type="match status" value="1"/>
</dbReference>
<dbReference type="PANTHER" id="PTHR43308:SF5">
    <property type="entry name" value="S-LAYER PROTEIN _ PEPTIDOGLYCAN ENDO-BETA-N-ACETYLGLUCOSAMINIDASE"/>
    <property type="match status" value="1"/>
</dbReference>
<dbReference type="Pfam" id="PF00963">
    <property type="entry name" value="Cohesin"/>
    <property type="match status" value="1"/>
</dbReference>
<dbReference type="Pfam" id="PF00395">
    <property type="entry name" value="SLH"/>
    <property type="match status" value="3"/>
</dbReference>
<dbReference type="SUPFAM" id="SSF49384">
    <property type="entry name" value="Carbohydrate-binding domain"/>
    <property type="match status" value="1"/>
</dbReference>
<dbReference type="PROSITE" id="PS51272">
    <property type="entry name" value="SLH"/>
    <property type="match status" value="3"/>
</dbReference>
<gene>
    <name type="primary">ancA</name>
    <name type="ordered locus">Cthe_3080</name>
</gene>
<evidence type="ECO:0000255" key="1"/>
<evidence type="ECO:0000255" key="2">
    <source>
        <dbReference type="PROSITE-ProRule" id="PRU00777"/>
    </source>
</evidence>
<evidence type="ECO:0000256" key="3">
    <source>
        <dbReference type="SAM" id="MobiDB-lite"/>
    </source>
</evidence>
<evidence type="ECO:0007829" key="4">
    <source>
        <dbReference type="PDB" id="3UL4"/>
    </source>
</evidence>